<sequence>MKLVFAGTPEVAVPALDALIASGRHEVAAVVTRPDAPAGRGRRLVASPVAQRAEEAGIEVLKPVKPRDEEFLARLREIAPDCCPVVAYGALLPRVALDIPAHGWVNLHFSLLPAWRGAAPVQHSIMAGDEITGASTFLIEEGLDSGPVFGTVTEEIRPTDTSGDLLTRLAFAGSGLLVATMDGVEEGKLKAVPQPADGITLAPKITVENAHVDWSTPALRVDRVVRGCTPAPGAWTVFRGERLKLIQVVPVPERTDLAPGALSVGKNNVYVGTGSYAVELLWVQAQGKKPMRAADWARGVRITDGEPLGA</sequence>
<dbReference type="EC" id="2.1.2.9" evidence="1"/>
<dbReference type="EMBL" id="BA000030">
    <property type="protein sequence ID" value="BAC74588.1"/>
    <property type="molecule type" value="Genomic_DNA"/>
</dbReference>
<dbReference type="RefSeq" id="WP_010988275.1">
    <property type="nucleotide sequence ID" value="NZ_JZJK01000082.1"/>
</dbReference>
<dbReference type="SMR" id="Q827P7"/>
<dbReference type="GeneID" id="41543952"/>
<dbReference type="KEGG" id="sma:SAVERM_6877"/>
<dbReference type="eggNOG" id="COG0223">
    <property type="taxonomic scope" value="Bacteria"/>
</dbReference>
<dbReference type="HOGENOM" id="CLU_033347_1_1_11"/>
<dbReference type="OrthoDB" id="9802815at2"/>
<dbReference type="Proteomes" id="UP000000428">
    <property type="component" value="Chromosome"/>
</dbReference>
<dbReference type="GO" id="GO:0005829">
    <property type="term" value="C:cytosol"/>
    <property type="evidence" value="ECO:0007669"/>
    <property type="project" value="TreeGrafter"/>
</dbReference>
<dbReference type="GO" id="GO:0004479">
    <property type="term" value="F:methionyl-tRNA formyltransferase activity"/>
    <property type="evidence" value="ECO:0007669"/>
    <property type="project" value="UniProtKB-UniRule"/>
</dbReference>
<dbReference type="CDD" id="cd08646">
    <property type="entry name" value="FMT_core_Met-tRNA-FMT_N"/>
    <property type="match status" value="1"/>
</dbReference>
<dbReference type="CDD" id="cd08704">
    <property type="entry name" value="Met_tRNA_FMT_C"/>
    <property type="match status" value="1"/>
</dbReference>
<dbReference type="FunFam" id="3.40.50.12230:FF:000001">
    <property type="entry name" value="Methionyl-tRNA formyltransferase"/>
    <property type="match status" value="1"/>
</dbReference>
<dbReference type="Gene3D" id="3.40.50.12230">
    <property type="match status" value="1"/>
</dbReference>
<dbReference type="HAMAP" id="MF_00182">
    <property type="entry name" value="Formyl_trans"/>
    <property type="match status" value="1"/>
</dbReference>
<dbReference type="InterPro" id="IPR005794">
    <property type="entry name" value="Fmt"/>
</dbReference>
<dbReference type="InterPro" id="IPR005793">
    <property type="entry name" value="Formyl_trans_C"/>
</dbReference>
<dbReference type="InterPro" id="IPR002376">
    <property type="entry name" value="Formyl_transf_N"/>
</dbReference>
<dbReference type="InterPro" id="IPR036477">
    <property type="entry name" value="Formyl_transf_N_sf"/>
</dbReference>
<dbReference type="InterPro" id="IPR011034">
    <property type="entry name" value="Formyl_transferase-like_C_sf"/>
</dbReference>
<dbReference type="InterPro" id="IPR044135">
    <property type="entry name" value="Met-tRNA-FMT_C"/>
</dbReference>
<dbReference type="InterPro" id="IPR041711">
    <property type="entry name" value="Met-tRNA-FMT_N"/>
</dbReference>
<dbReference type="NCBIfam" id="TIGR00460">
    <property type="entry name" value="fmt"/>
    <property type="match status" value="1"/>
</dbReference>
<dbReference type="PANTHER" id="PTHR11138">
    <property type="entry name" value="METHIONYL-TRNA FORMYLTRANSFERASE"/>
    <property type="match status" value="1"/>
</dbReference>
<dbReference type="PANTHER" id="PTHR11138:SF5">
    <property type="entry name" value="METHIONYL-TRNA FORMYLTRANSFERASE, MITOCHONDRIAL"/>
    <property type="match status" value="1"/>
</dbReference>
<dbReference type="Pfam" id="PF02911">
    <property type="entry name" value="Formyl_trans_C"/>
    <property type="match status" value="1"/>
</dbReference>
<dbReference type="Pfam" id="PF00551">
    <property type="entry name" value="Formyl_trans_N"/>
    <property type="match status" value="1"/>
</dbReference>
<dbReference type="SUPFAM" id="SSF50486">
    <property type="entry name" value="FMT C-terminal domain-like"/>
    <property type="match status" value="1"/>
</dbReference>
<dbReference type="SUPFAM" id="SSF53328">
    <property type="entry name" value="Formyltransferase"/>
    <property type="match status" value="1"/>
</dbReference>
<comment type="function">
    <text evidence="1">Attaches a formyl group to the free amino group of methionyl-tRNA(fMet). The formyl group appears to play a dual role in the initiator identity of N-formylmethionyl-tRNA by promoting its recognition by IF2 and preventing the misappropriation of this tRNA by the elongation apparatus.</text>
</comment>
<comment type="catalytic activity">
    <reaction evidence="1">
        <text>L-methionyl-tRNA(fMet) + (6R)-10-formyltetrahydrofolate = N-formyl-L-methionyl-tRNA(fMet) + (6S)-5,6,7,8-tetrahydrofolate + H(+)</text>
        <dbReference type="Rhea" id="RHEA:24380"/>
        <dbReference type="Rhea" id="RHEA-COMP:9952"/>
        <dbReference type="Rhea" id="RHEA-COMP:9953"/>
        <dbReference type="ChEBI" id="CHEBI:15378"/>
        <dbReference type="ChEBI" id="CHEBI:57453"/>
        <dbReference type="ChEBI" id="CHEBI:78530"/>
        <dbReference type="ChEBI" id="CHEBI:78844"/>
        <dbReference type="ChEBI" id="CHEBI:195366"/>
        <dbReference type="EC" id="2.1.2.9"/>
    </reaction>
</comment>
<comment type="similarity">
    <text evidence="1">Belongs to the Fmt family.</text>
</comment>
<keyword id="KW-0648">Protein biosynthesis</keyword>
<keyword id="KW-1185">Reference proteome</keyword>
<keyword id="KW-0808">Transferase</keyword>
<accession>Q827P7</accession>
<organism>
    <name type="scientific">Streptomyces avermitilis (strain ATCC 31267 / DSM 46492 / JCM 5070 / NBRC 14893 / NCIMB 12804 / NRRL 8165 / MA-4680)</name>
    <dbReference type="NCBI Taxonomy" id="227882"/>
    <lineage>
        <taxon>Bacteria</taxon>
        <taxon>Bacillati</taxon>
        <taxon>Actinomycetota</taxon>
        <taxon>Actinomycetes</taxon>
        <taxon>Kitasatosporales</taxon>
        <taxon>Streptomycetaceae</taxon>
        <taxon>Streptomyces</taxon>
    </lineage>
</organism>
<evidence type="ECO:0000255" key="1">
    <source>
        <dbReference type="HAMAP-Rule" id="MF_00182"/>
    </source>
</evidence>
<feature type="chain" id="PRO_0000083055" description="Methionyl-tRNA formyltransferase">
    <location>
        <begin position="1"/>
        <end position="310"/>
    </location>
</feature>
<feature type="binding site" evidence="1">
    <location>
        <begin position="110"/>
        <end position="113"/>
    </location>
    <ligand>
        <name>(6S)-5,6,7,8-tetrahydrofolate</name>
        <dbReference type="ChEBI" id="CHEBI:57453"/>
    </ligand>
</feature>
<proteinExistence type="inferred from homology"/>
<gene>
    <name evidence="1" type="primary">fmt</name>
    <name type="ordered locus">SAV_6877</name>
</gene>
<protein>
    <recommendedName>
        <fullName evidence="1">Methionyl-tRNA formyltransferase</fullName>
        <ecNumber evidence="1">2.1.2.9</ecNumber>
    </recommendedName>
</protein>
<name>FMT_STRAW</name>
<reference key="1">
    <citation type="journal article" date="2001" name="Proc. Natl. Acad. Sci. U.S.A.">
        <title>Genome sequence of an industrial microorganism Streptomyces avermitilis: deducing the ability of producing secondary metabolites.</title>
        <authorList>
            <person name="Omura S."/>
            <person name="Ikeda H."/>
            <person name="Ishikawa J."/>
            <person name="Hanamoto A."/>
            <person name="Takahashi C."/>
            <person name="Shinose M."/>
            <person name="Takahashi Y."/>
            <person name="Horikawa H."/>
            <person name="Nakazawa H."/>
            <person name="Osonoe T."/>
            <person name="Kikuchi H."/>
            <person name="Shiba T."/>
            <person name="Sakaki Y."/>
            <person name="Hattori M."/>
        </authorList>
    </citation>
    <scope>NUCLEOTIDE SEQUENCE [LARGE SCALE GENOMIC DNA]</scope>
    <source>
        <strain>ATCC 31267 / DSM 46492 / JCM 5070 / NBRC 14893 / NCIMB 12804 / NRRL 8165 / MA-4680</strain>
    </source>
</reference>
<reference key="2">
    <citation type="journal article" date="2003" name="Nat. Biotechnol.">
        <title>Complete genome sequence and comparative analysis of the industrial microorganism Streptomyces avermitilis.</title>
        <authorList>
            <person name="Ikeda H."/>
            <person name="Ishikawa J."/>
            <person name="Hanamoto A."/>
            <person name="Shinose M."/>
            <person name="Kikuchi H."/>
            <person name="Shiba T."/>
            <person name="Sakaki Y."/>
            <person name="Hattori M."/>
            <person name="Omura S."/>
        </authorList>
    </citation>
    <scope>NUCLEOTIDE SEQUENCE [LARGE SCALE GENOMIC DNA]</scope>
    <source>
        <strain>ATCC 31267 / DSM 46492 / JCM 5070 / NBRC 14893 / NCIMB 12804 / NRRL 8165 / MA-4680</strain>
    </source>
</reference>